<evidence type="ECO:0000255" key="1">
    <source>
        <dbReference type="HAMAP-Rule" id="MF_01835"/>
    </source>
</evidence>
<evidence type="ECO:0000305" key="2"/>
<evidence type="ECO:0000312" key="3">
    <source>
        <dbReference type="EMBL" id="ACA98298.1"/>
    </source>
</evidence>
<evidence type="ECO:0000312" key="4">
    <source>
        <dbReference type="EMBL" id="BAD21212.1"/>
    </source>
</evidence>
<accession>Q6L8L6</accession>
<accession>B1XMW1</accession>
<sequence>MNLLKKTYVLKLYVAGNTPNSVRALKTLKNILETDFKGVYALKVIDVLQNPQLAEEDKILATPTLSKVLPPPVRKIIGDLSDREKVLIGLDLLYEEFLEREEEL</sequence>
<keyword id="KW-0090">Biological rhythms</keyword>
<keyword id="KW-1185">Reference proteome</keyword>
<proteinExistence type="inferred from homology"/>
<comment type="function">
    <text evidence="1">Key component of the KaiABC oscillator complex, which constitutes the main circadian regulator in cyanobacteria. Complex composition changes during the circadian cycle to control KaiC phosphorylation. KaiA stimulates KaiC autophosphorylation, while KaiB sequesters KaiA, leading to KaiC autodephosphorylation. Phospho-Ser-431 KaiC accumulation triggers binding of KaiB to form the KaiB(6):KaiC(6) complex, leading to changes in output regulators CikA and SasA. KaiB switches to a thioredoxin-like fold (KaiB(fs)) when bound to KaiC. KaiB(6):KaiC(6) formation exposes a site for KaiA binding that sequesters KaiA from KaiC, making the KaiC(6):KaiB(6):KaiA(12) complex that results in KaiC autodephosphorylation.</text>
</comment>
<comment type="function">
    <text evidence="1">A metamorphic protein which reversibly switches between an inactive tetrameric fold and a rare, thioredoxin-like monomeric fold (KaiB(fs)). KaiB(fs) binds phospho-KaiC, KaiA and CikA. KaiA and CikA compete for binding to KaiB(fs), and KaiB(fs) and SasA compete for binding to KaiC, thus the clock oscillator and output signal pathway are tightly coupled.</text>
</comment>
<comment type="subunit">
    <text evidence="1">The KaiABC complex composition changes during the circadian cycle to control KaiC phosphorylation. Complexes KaiC(6), KaiA(2-4):KaiC(6), KaiB(6):KaiC(6) and KaiC(6):KaiB(6):KaiA(12) are among the most important forms, many form cooperatively. Undergoes a major conformational rearrangment; in the free state forms homotetramers as a dimer of dimers. When bound to the CI domain of KaiC switches to a monomeric thioredoxin-fold (KaiB(fs)). KaiB(fs) binds CikA, leading it to dephosphorylate phospho-RpaA.</text>
</comment>
<comment type="domain">
    <text evidence="1">Has 2 forms, fold switches to a thioredoxin-like fold (KaiB(fs)) when bound to KaiC.</text>
</comment>
<comment type="similarity">
    <text evidence="1">Belongs to the KaiB family.</text>
</comment>
<comment type="sequence caution" evidence="2">
    <conflict type="erroneous initiation">
        <sequence resource="EMBL-CDS" id="ACA98298"/>
    </conflict>
    <text>Extended N-terminus.</text>
</comment>
<protein>
    <recommendedName>
        <fullName evidence="1">Circadian clock oscillator protein KaiB</fullName>
    </recommendedName>
</protein>
<gene>
    <name evidence="1" type="primary">kaiB</name>
    <name type="ordered locus">SYNPCC7002_A0288</name>
</gene>
<name>KAIB_PICP2</name>
<dbReference type="EMBL" id="AB120711">
    <property type="protein sequence ID" value="BAD21212.1"/>
    <property type="molecule type" value="Genomic_DNA"/>
</dbReference>
<dbReference type="EMBL" id="CP000951">
    <property type="protein sequence ID" value="ACA98298.1"/>
    <property type="status" value="ALT_INIT"/>
    <property type="molecule type" value="Genomic_DNA"/>
</dbReference>
<dbReference type="RefSeq" id="WP_030006078.1">
    <property type="nucleotide sequence ID" value="NZ_JAHHPU010000004.1"/>
</dbReference>
<dbReference type="SMR" id="Q6L8L6"/>
<dbReference type="STRING" id="32049.SYNPCC7002_A0288"/>
<dbReference type="KEGG" id="syp:SYNPCC7002_A0288"/>
<dbReference type="eggNOG" id="COG4251">
    <property type="taxonomic scope" value="Bacteria"/>
</dbReference>
<dbReference type="HOGENOM" id="CLU_144073_0_0_3"/>
<dbReference type="Proteomes" id="UP000001688">
    <property type="component" value="Chromosome"/>
</dbReference>
<dbReference type="GO" id="GO:0007623">
    <property type="term" value="P:circadian rhythm"/>
    <property type="evidence" value="ECO:0007669"/>
    <property type="project" value="UniProtKB-UniRule"/>
</dbReference>
<dbReference type="CDD" id="cd02978">
    <property type="entry name" value="KaiB_like"/>
    <property type="match status" value="1"/>
</dbReference>
<dbReference type="FunFam" id="3.40.30.10:FF:000180">
    <property type="entry name" value="Circadian clock protein KaiB"/>
    <property type="match status" value="1"/>
</dbReference>
<dbReference type="Gene3D" id="3.40.30.10">
    <property type="entry name" value="Glutaredoxin"/>
    <property type="match status" value="1"/>
</dbReference>
<dbReference type="HAMAP" id="MF_01835">
    <property type="entry name" value="KaiB"/>
    <property type="match status" value="1"/>
</dbReference>
<dbReference type="InterPro" id="IPR013474">
    <property type="entry name" value="Circ_KaiB"/>
</dbReference>
<dbReference type="InterPro" id="IPR039022">
    <property type="entry name" value="KaiB-like"/>
</dbReference>
<dbReference type="InterPro" id="IPR011649">
    <property type="entry name" value="KaiB_domain"/>
</dbReference>
<dbReference type="InterPro" id="IPR036249">
    <property type="entry name" value="Thioredoxin-like_sf"/>
</dbReference>
<dbReference type="NCBIfam" id="TIGR02654">
    <property type="entry name" value="circ_KaiB"/>
    <property type="match status" value="1"/>
</dbReference>
<dbReference type="NCBIfam" id="NF006798">
    <property type="entry name" value="PRK09301.1"/>
    <property type="match status" value="1"/>
</dbReference>
<dbReference type="PANTHER" id="PTHR41709:SF2">
    <property type="entry name" value="CIRCADIAN CLOCK PROTEIN KAIB2"/>
    <property type="match status" value="1"/>
</dbReference>
<dbReference type="PANTHER" id="PTHR41709">
    <property type="entry name" value="KAIB-LIKE PROTEIN 1"/>
    <property type="match status" value="1"/>
</dbReference>
<dbReference type="Pfam" id="PF07689">
    <property type="entry name" value="KaiB"/>
    <property type="match status" value="1"/>
</dbReference>
<dbReference type="SMART" id="SM01248">
    <property type="entry name" value="KaiB"/>
    <property type="match status" value="1"/>
</dbReference>
<dbReference type="SUPFAM" id="SSF52833">
    <property type="entry name" value="Thioredoxin-like"/>
    <property type="match status" value="1"/>
</dbReference>
<reference evidence="4" key="1">
    <citation type="journal article" date="2004" name="Nat. Struct. Mol. Biol.">
        <title>Crystal structure of the C-terminal clock-oscillator domain of the cyanobacterial KaiA protein.</title>
        <authorList>
            <person name="Uzumaki T."/>
            <person name="Fujita M."/>
            <person name="Nakatsu T."/>
            <person name="Hayashi F."/>
            <person name="Shibata H."/>
            <person name="Itoh N."/>
            <person name="Kato H."/>
            <person name="Ishiura M."/>
        </authorList>
    </citation>
    <scope>NUCLEOTIDE SEQUENCE [GENOMIC DNA]</scope>
    <source>
        <strain>ATCC 27264 / PCC 7002 / PR-6</strain>
    </source>
</reference>
<reference evidence="3" key="2">
    <citation type="submission" date="2008-02" db="EMBL/GenBank/DDBJ databases">
        <title>Complete sequence of Synechococcus sp. PCC 7002.</title>
        <authorList>
            <person name="Li T."/>
            <person name="Zhao J."/>
            <person name="Zhao C."/>
            <person name="Liu Z."/>
            <person name="Zhao F."/>
            <person name="Marquardt J."/>
            <person name="Nomura C.T."/>
            <person name="Persson S."/>
            <person name="Detter J.C."/>
            <person name="Richardson P.M."/>
            <person name="Lanz C."/>
            <person name="Schuster S.C."/>
            <person name="Wang J."/>
            <person name="Li S."/>
            <person name="Huang X."/>
            <person name="Cai T."/>
            <person name="Yu Z."/>
            <person name="Luo J."/>
            <person name="Zhao J."/>
            <person name="Bryant D.A."/>
        </authorList>
    </citation>
    <scope>NUCLEOTIDE SEQUENCE [LARGE SCALE GENOMIC DNA]</scope>
    <source>
        <strain>ATCC 27264 / PCC 7002 / PR-6</strain>
    </source>
</reference>
<feature type="chain" id="PRO_0000217766" description="Circadian clock oscillator protein KaiB">
    <location>
        <begin position="1"/>
        <end position="104"/>
    </location>
</feature>
<feature type="sequence conflict" description="In Ref. 1; BAD21212." evidence="2" ref="1">
    <original>L</original>
    <variation>F</variation>
    <location>
        <position position="48"/>
    </location>
</feature>
<feature type="sequence conflict" description="In Ref. 1; BAD21212." evidence="2" ref="1">
    <original>Q</original>
    <variation>K</variation>
    <location>
        <position position="52"/>
    </location>
</feature>
<feature type="sequence conflict" description="In Ref. 1; BAD21212." evidence="2" ref="1">
    <original>L</original>
    <variation>F</variation>
    <location>
        <position position="65"/>
    </location>
</feature>
<organism>
    <name type="scientific">Picosynechococcus sp. (strain ATCC 27264 / PCC 7002 / PR-6)</name>
    <name type="common">Agmenellum quadruplicatum</name>
    <dbReference type="NCBI Taxonomy" id="32049"/>
    <lineage>
        <taxon>Bacteria</taxon>
        <taxon>Bacillati</taxon>
        <taxon>Cyanobacteriota</taxon>
        <taxon>Cyanophyceae</taxon>
        <taxon>Oscillatoriophycideae</taxon>
        <taxon>Chroococcales</taxon>
        <taxon>Geminocystaceae</taxon>
        <taxon>Picosynechococcus</taxon>
    </lineage>
</organism>